<comment type="function">
    <text evidence="1">Part of an energy-coupled inorganic carbon pump.</text>
</comment>
<comment type="cofactor">
    <cofactor evidence="1">
        <name>Zn(2+)</name>
        <dbReference type="ChEBI" id="CHEBI:29105"/>
    </cofactor>
</comment>
<comment type="subunit">
    <text evidence="1">Forms a complex with DabB.</text>
</comment>
<comment type="subcellular location">
    <subcellularLocation>
        <location evidence="1">Cell inner membrane</location>
        <topology evidence="1">Peripheral membrane protein</topology>
    </subcellularLocation>
</comment>
<comment type="similarity">
    <text evidence="1">Belongs to the inorganic carbon transporter (TC 9.A.2) DabA family.</text>
</comment>
<reference key="1">
    <citation type="journal article" date="2007" name="Environ. Microbiol.">
        <title>Whole-genome analysis of the ammonia-oxidizing bacterium, Nitrosomonas eutropha C91: implications for niche adaptation.</title>
        <authorList>
            <person name="Stein L.Y."/>
            <person name="Arp D.J."/>
            <person name="Berube P.M."/>
            <person name="Chain P.S."/>
            <person name="Hauser L."/>
            <person name="Jetten M.S."/>
            <person name="Klotz M.G."/>
            <person name="Larimer F.W."/>
            <person name="Norton J.M."/>
            <person name="Op den Camp H.J.M."/>
            <person name="Shin M."/>
            <person name="Wei X."/>
        </authorList>
    </citation>
    <scope>NUCLEOTIDE SEQUENCE [LARGE SCALE GENOMIC DNA]</scope>
    <source>
        <strain>DSM 101675 / C91 / Nm57</strain>
    </source>
</reference>
<organism>
    <name type="scientific">Nitrosomonas eutropha (strain DSM 101675 / C91 / Nm57)</name>
    <dbReference type="NCBI Taxonomy" id="335283"/>
    <lineage>
        <taxon>Bacteria</taxon>
        <taxon>Pseudomonadati</taxon>
        <taxon>Pseudomonadota</taxon>
        <taxon>Betaproteobacteria</taxon>
        <taxon>Nitrosomonadales</taxon>
        <taxon>Nitrosomonadaceae</taxon>
        <taxon>Nitrosomonas</taxon>
    </lineage>
</organism>
<evidence type="ECO:0000255" key="1">
    <source>
        <dbReference type="HAMAP-Rule" id="MF_01871"/>
    </source>
</evidence>
<protein>
    <recommendedName>
        <fullName evidence="1">Probable inorganic carbon transporter subunit DabA</fullName>
    </recommendedName>
</protein>
<gene>
    <name evidence="1" type="primary">dabA</name>
    <name type="ordered locus">Neut_0801</name>
</gene>
<proteinExistence type="inferred from homology"/>
<feature type="chain" id="PRO_0000387283" description="Probable inorganic carbon transporter subunit DabA">
    <location>
        <begin position="1"/>
        <end position="1042"/>
    </location>
</feature>
<feature type="binding site" evidence="1">
    <location>
        <position position="462"/>
    </location>
    <ligand>
        <name>Zn(2+)</name>
        <dbReference type="ChEBI" id="CHEBI:29105"/>
    </ligand>
</feature>
<feature type="binding site" evidence="1">
    <location>
        <position position="464"/>
    </location>
    <ligand>
        <name>Zn(2+)</name>
        <dbReference type="ChEBI" id="CHEBI:29105"/>
    </ligand>
</feature>
<feature type="binding site" evidence="1">
    <location>
        <position position="721"/>
    </location>
    <ligand>
        <name>Zn(2+)</name>
        <dbReference type="ChEBI" id="CHEBI:29105"/>
    </ligand>
</feature>
<feature type="binding site" evidence="1">
    <location>
        <position position="736"/>
    </location>
    <ligand>
        <name>Zn(2+)</name>
        <dbReference type="ChEBI" id="CHEBI:29105"/>
    </ligand>
</feature>
<accession>Q0AHW4</accession>
<name>DABA_NITEC</name>
<sequence length="1042" mass="116586">MVDALNLGKILRVHATVYVAAEPVPLFWPMRTFIYNNPLHGLEGLPFTEAVQAARGLFHARVYLPRTTYQHYLREGKGDVRMLDAITAQFAQTAPSIDGIDWQRWLSAVRKAPTDASPYVPHASAEDVAAVLAGQAIPNGSAIAAGLDAAMLADLPPWRPLTECIDSLWGTNLAAELDELVVKSCLDFFDEDQSSWRMPGRKQGFYAAWADVARRNGRMFLRGLAIKRILDQAPRADAAIVHVMQSLGIAEEHWQAYFSRELLRLHGWAGFIRWRSGAEHYHWGRKHPADLVDFLAVRLVFALALIEESARHRKTPANRPAFDAFLREQRDCALLRYALHAGELLPGWAQRIDDALERSSGNRIARLAEDYAKEWRRVHAQRQGQILQKIAMEAGTPVQTLAALGAQGAAEVLEVLQRFAVQEGSMWLRALEARAIDHLLSQIVTPDEPAVPKRAFAQALFCIDVRSERLRRNLENVGDFLTFGIAGFFGVPVGFLGYGKGSETHLCPAIVTPKNLVLEISAAIDFDEEDFVSTLGHVLHDLKSSVISPFVTVEAIGALFGFDLIGKTMAPLAYHRWRSRLDAPHPFTHLLLDKLSREQADSIVRALQRAMIVNALRIELGIERERVNDDMIRELRETALGHCSGTTILVREFGLSLEREARFIEQVREVYRVNSSYANYQMLRLGRIGFSLDEQVNYVWTALTSIGLTRNFSRFVLLIGHGSHSENNPYESALDCGACGGSNGLVSARVLAQMANKAEVRAKLRTIGVDIPADTWFVPGLHTTTTDTVELYNLDFLPPRLLVYLERLRNGLYAASRLSAAERVPTLLPQAKTLKPAQAHRIVRVMSHDWSQVRPEWGLSGNLYFVVGRRGLTQKANLHGRSFLQSYDWQLDPKGRLLENILAGPVVVGQWINMEHYFSTVDNTHFGSGSKVYHNVAGRFGVMTGNLSDLRTGLPAQTVMRHGQPYHEPLRLIVMIEAPLDFARRAIEAVAKVKSLVQGQWVRTIILDPTQDMQAYVFDDGEWQVHFISASQSTYTEEVVTA</sequence>
<keyword id="KW-0997">Cell inner membrane</keyword>
<keyword id="KW-1003">Cell membrane</keyword>
<keyword id="KW-0472">Membrane</keyword>
<keyword id="KW-0479">Metal-binding</keyword>
<keyword id="KW-0813">Transport</keyword>
<keyword id="KW-0862">Zinc</keyword>
<dbReference type="EMBL" id="CP000450">
    <property type="protein sequence ID" value="ABI59068.1"/>
    <property type="molecule type" value="Genomic_DNA"/>
</dbReference>
<dbReference type="RefSeq" id="WP_011633893.1">
    <property type="nucleotide sequence ID" value="NC_008344.1"/>
</dbReference>
<dbReference type="STRING" id="335283.Neut_0801"/>
<dbReference type="KEGG" id="net:Neut_0801"/>
<dbReference type="eggNOG" id="COG3002">
    <property type="taxonomic scope" value="Bacteria"/>
</dbReference>
<dbReference type="HOGENOM" id="CLU_009885_0_0_4"/>
<dbReference type="OrthoDB" id="9805101at2"/>
<dbReference type="Proteomes" id="UP000001966">
    <property type="component" value="Chromosome"/>
</dbReference>
<dbReference type="GO" id="GO:0005886">
    <property type="term" value="C:plasma membrane"/>
    <property type="evidence" value="ECO:0007669"/>
    <property type="project" value="UniProtKB-SubCell"/>
</dbReference>
<dbReference type="GO" id="GO:0008270">
    <property type="term" value="F:zinc ion binding"/>
    <property type="evidence" value="ECO:0007669"/>
    <property type="project" value="UniProtKB-UniRule"/>
</dbReference>
<dbReference type="HAMAP" id="MF_01871">
    <property type="entry name" value="DabA"/>
    <property type="match status" value="1"/>
</dbReference>
<dbReference type="InterPro" id="IPR018752">
    <property type="entry name" value="DabA"/>
</dbReference>
<dbReference type="PANTHER" id="PTHR38344:SF1">
    <property type="entry name" value="INORGANIC CARBON TRANSPORTER SUBUNIT DABA-RELATED"/>
    <property type="match status" value="1"/>
</dbReference>
<dbReference type="PANTHER" id="PTHR38344">
    <property type="entry name" value="UPF0753 PROTEIN AQ_863"/>
    <property type="match status" value="1"/>
</dbReference>
<dbReference type="Pfam" id="PF10070">
    <property type="entry name" value="DabA"/>
    <property type="match status" value="1"/>
</dbReference>